<gene>
    <name evidence="1" type="primary">truD</name>
    <name type="ordered locus">EcHS_A2883</name>
</gene>
<feature type="chain" id="PRO_1000084735" description="tRNA pseudouridine synthase D">
    <location>
        <begin position="1"/>
        <end position="349"/>
    </location>
</feature>
<feature type="domain" description="TRUD" evidence="1">
    <location>
        <begin position="155"/>
        <end position="303"/>
    </location>
</feature>
<feature type="active site" description="Nucleophile" evidence="1">
    <location>
        <position position="80"/>
    </location>
</feature>
<feature type="binding site" evidence="1">
    <location>
        <position position="27"/>
    </location>
    <ligand>
        <name>substrate</name>
    </ligand>
</feature>
<feature type="binding site" evidence="1">
    <location>
        <position position="129"/>
    </location>
    <ligand>
        <name>substrate</name>
    </ligand>
</feature>
<feature type="binding site" evidence="1">
    <location>
        <position position="329"/>
    </location>
    <ligand>
        <name>substrate</name>
    </ligand>
</feature>
<protein>
    <recommendedName>
        <fullName evidence="1">tRNA pseudouridine synthase D</fullName>
        <ecNumber evidence="1">5.4.99.27</ecNumber>
    </recommendedName>
    <alternativeName>
        <fullName evidence="1">tRNA pseudouridine(13) synthase</fullName>
    </alternativeName>
    <alternativeName>
        <fullName evidence="1">tRNA pseudouridylate synthase D</fullName>
    </alternativeName>
    <alternativeName>
        <fullName evidence="1">tRNA-uridine isomerase D</fullName>
    </alternativeName>
</protein>
<organism>
    <name type="scientific">Escherichia coli O9:H4 (strain HS)</name>
    <dbReference type="NCBI Taxonomy" id="331112"/>
    <lineage>
        <taxon>Bacteria</taxon>
        <taxon>Pseudomonadati</taxon>
        <taxon>Pseudomonadota</taxon>
        <taxon>Gammaproteobacteria</taxon>
        <taxon>Enterobacterales</taxon>
        <taxon>Enterobacteriaceae</taxon>
        <taxon>Escherichia</taxon>
    </lineage>
</organism>
<comment type="function">
    <text evidence="1">Responsible for synthesis of pseudouridine from uracil-13 in transfer RNAs.</text>
</comment>
<comment type="catalytic activity">
    <reaction evidence="1">
        <text>uridine(13) in tRNA = pseudouridine(13) in tRNA</text>
        <dbReference type="Rhea" id="RHEA:42540"/>
        <dbReference type="Rhea" id="RHEA-COMP:10105"/>
        <dbReference type="Rhea" id="RHEA-COMP:10106"/>
        <dbReference type="ChEBI" id="CHEBI:65314"/>
        <dbReference type="ChEBI" id="CHEBI:65315"/>
        <dbReference type="EC" id="5.4.99.27"/>
    </reaction>
</comment>
<comment type="similarity">
    <text evidence="1">Belongs to the pseudouridine synthase TruD family.</text>
</comment>
<sequence>MIEFDNLTYLHGKPQGTGLLKANPEDFVVVEDLGFEPDGEGEHILVRILKNGCNTRFVADALAKFLKIHAREVSFAGQKDKHAVTEQWLCARVPGKEMPDLSAFQLEGCQVLEYARHKRKLRLGALKGNAFTLVLREVSNRDDVEQRLNDICVKGVPNYFGAQRFGIGGSNLQGAQRWAQTNTPVRDRNKRSFWLSAARSALFNQIVAERLKKADVNQVVDGDALQLAGRGSWFVATTEELAELQRRVNDKELMITAALPGSGEWGTQREALAFEQAAVAAETELQALLVREKVEAARRAMLLYPQQLSWNWWDDVTVEIRFWLPAGSFATSVVRELINTTGDYAHIAE</sequence>
<name>TRUD_ECOHS</name>
<accession>A8A3M4</accession>
<proteinExistence type="inferred from homology"/>
<evidence type="ECO:0000255" key="1">
    <source>
        <dbReference type="HAMAP-Rule" id="MF_01082"/>
    </source>
</evidence>
<keyword id="KW-0413">Isomerase</keyword>
<keyword id="KW-0819">tRNA processing</keyword>
<dbReference type="EC" id="5.4.99.27" evidence="1"/>
<dbReference type="EMBL" id="CP000802">
    <property type="protein sequence ID" value="ABV07128.1"/>
    <property type="molecule type" value="Genomic_DNA"/>
</dbReference>
<dbReference type="RefSeq" id="WP_000568946.1">
    <property type="nucleotide sequence ID" value="NC_009800.1"/>
</dbReference>
<dbReference type="SMR" id="A8A3M4"/>
<dbReference type="KEGG" id="ecx:EcHS_A2883"/>
<dbReference type="HOGENOM" id="CLU_005281_4_0_6"/>
<dbReference type="GO" id="GO:0005829">
    <property type="term" value="C:cytosol"/>
    <property type="evidence" value="ECO:0007669"/>
    <property type="project" value="TreeGrafter"/>
</dbReference>
<dbReference type="GO" id="GO:0003723">
    <property type="term" value="F:RNA binding"/>
    <property type="evidence" value="ECO:0007669"/>
    <property type="project" value="InterPro"/>
</dbReference>
<dbReference type="GO" id="GO:0160150">
    <property type="term" value="F:tRNA pseudouridine(13) synthase activity"/>
    <property type="evidence" value="ECO:0007669"/>
    <property type="project" value="UniProtKB-EC"/>
</dbReference>
<dbReference type="GO" id="GO:0031119">
    <property type="term" value="P:tRNA pseudouridine synthesis"/>
    <property type="evidence" value="ECO:0007669"/>
    <property type="project" value="UniProtKB-UniRule"/>
</dbReference>
<dbReference type="CDD" id="cd02575">
    <property type="entry name" value="PseudoU_synth_EcTruD"/>
    <property type="match status" value="1"/>
</dbReference>
<dbReference type="FunFam" id="3.30.2340.10:FF:000001">
    <property type="entry name" value="tRNA pseudouridine synthase D"/>
    <property type="match status" value="1"/>
</dbReference>
<dbReference type="FunFam" id="3.30.2350.20:FF:000001">
    <property type="entry name" value="tRNA pseudouridine synthase D"/>
    <property type="match status" value="1"/>
</dbReference>
<dbReference type="Gene3D" id="3.30.2350.20">
    <property type="entry name" value="TruD, catalytic domain"/>
    <property type="match status" value="1"/>
</dbReference>
<dbReference type="Gene3D" id="3.30.2340.10">
    <property type="entry name" value="TruD, insertion domain"/>
    <property type="match status" value="1"/>
</dbReference>
<dbReference type="HAMAP" id="MF_01082">
    <property type="entry name" value="TruD"/>
    <property type="match status" value="1"/>
</dbReference>
<dbReference type="InterPro" id="IPR020103">
    <property type="entry name" value="PsdUridine_synth_cat_dom_sf"/>
</dbReference>
<dbReference type="InterPro" id="IPR001656">
    <property type="entry name" value="PsdUridine_synth_TruD"/>
</dbReference>
<dbReference type="InterPro" id="IPR020119">
    <property type="entry name" value="PsdUridine_synth_TruD_CS"/>
</dbReference>
<dbReference type="InterPro" id="IPR011760">
    <property type="entry name" value="PsdUridine_synth_TruD_insert"/>
</dbReference>
<dbReference type="InterPro" id="IPR042214">
    <property type="entry name" value="TruD_catalytic"/>
</dbReference>
<dbReference type="InterPro" id="IPR043165">
    <property type="entry name" value="TruD_insert_sf"/>
</dbReference>
<dbReference type="InterPro" id="IPR050170">
    <property type="entry name" value="TruD_pseudoU_synthase"/>
</dbReference>
<dbReference type="NCBIfam" id="NF002155">
    <property type="entry name" value="PRK00984.1-4"/>
    <property type="match status" value="1"/>
</dbReference>
<dbReference type="NCBIfam" id="TIGR00094">
    <property type="entry name" value="tRNA_TruD_broad"/>
    <property type="match status" value="1"/>
</dbReference>
<dbReference type="PANTHER" id="PTHR47811">
    <property type="entry name" value="TRNA PSEUDOURIDINE SYNTHASE D"/>
    <property type="match status" value="1"/>
</dbReference>
<dbReference type="PANTHER" id="PTHR47811:SF1">
    <property type="entry name" value="TRNA PSEUDOURIDINE SYNTHASE D"/>
    <property type="match status" value="1"/>
</dbReference>
<dbReference type="Pfam" id="PF01142">
    <property type="entry name" value="TruD"/>
    <property type="match status" value="2"/>
</dbReference>
<dbReference type="SUPFAM" id="SSF55120">
    <property type="entry name" value="Pseudouridine synthase"/>
    <property type="match status" value="1"/>
</dbReference>
<dbReference type="PROSITE" id="PS50984">
    <property type="entry name" value="TRUD"/>
    <property type="match status" value="1"/>
</dbReference>
<dbReference type="PROSITE" id="PS01268">
    <property type="entry name" value="UPF0024"/>
    <property type="match status" value="1"/>
</dbReference>
<reference key="1">
    <citation type="journal article" date="2008" name="J. Bacteriol.">
        <title>The pangenome structure of Escherichia coli: comparative genomic analysis of E. coli commensal and pathogenic isolates.</title>
        <authorList>
            <person name="Rasko D.A."/>
            <person name="Rosovitz M.J."/>
            <person name="Myers G.S.A."/>
            <person name="Mongodin E.F."/>
            <person name="Fricke W.F."/>
            <person name="Gajer P."/>
            <person name="Crabtree J."/>
            <person name="Sebaihia M."/>
            <person name="Thomson N.R."/>
            <person name="Chaudhuri R."/>
            <person name="Henderson I.R."/>
            <person name="Sperandio V."/>
            <person name="Ravel J."/>
        </authorList>
    </citation>
    <scope>NUCLEOTIDE SEQUENCE [LARGE SCALE GENOMIC DNA]</scope>
    <source>
        <strain>HS</strain>
    </source>
</reference>